<organism evidence="9">
    <name type="scientific">Xenopus laevis</name>
    <name type="common">African clawed frog</name>
    <dbReference type="NCBI Taxonomy" id="8355"/>
    <lineage>
        <taxon>Eukaryota</taxon>
        <taxon>Metazoa</taxon>
        <taxon>Chordata</taxon>
        <taxon>Craniata</taxon>
        <taxon>Vertebrata</taxon>
        <taxon>Euteleostomi</taxon>
        <taxon>Amphibia</taxon>
        <taxon>Batrachia</taxon>
        <taxon>Anura</taxon>
        <taxon>Pipoidea</taxon>
        <taxon>Pipidae</taxon>
        <taxon>Xenopodinae</taxon>
        <taxon>Xenopus</taxon>
        <taxon>Xenopus</taxon>
    </lineage>
</organism>
<gene>
    <name evidence="12" type="primary">dguok</name>
    <name evidence="10" type="ORF">XELAEV_18017396mg</name>
</gene>
<keyword id="KW-0067">ATP-binding</keyword>
<keyword id="KW-0418">Kinase</keyword>
<keyword id="KW-0496">Mitochondrion</keyword>
<keyword id="KW-0547">Nucleotide-binding</keyword>
<keyword id="KW-1185">Reference proteome</keyword>
<keyword id="KW-0808">Transferase</keyword>
<keyword id="KW-0809">Transit peptide</keyword>
<name>DGUOK_XENLA</name>
<accession>Q6GPW6</accession>
<proteinExistence type="evidence at protein level"/>
<dbReference type="EC" id="2.7.1.113" evidence="6"/>
<dbReference type="EMBL" id="CM004470">
    <property type="protein sequence ID" value="OCT88768.1"/>
    <property type="molecule type" value="Genomic_DNA"/>
</dbReference>
<dbReference type="EMBL" id="BC072990">
    <property type="protein sequence ID" value="AAH72990.1"/>
    <property type="molecule type" value="mRNA"/>
</dbReference>
<dbReference type="RefSeq" id="NP_001085591.1">
    <property type="nucleotide sequence ID" value="NM_001092122.1"/>
</dbReference>
<dbReference type="RefSeq" id="XP_018106416.1">
    <property type="nucleotide sequence ID" value="XM_018250927.1"/>
</dbReference>
<dbReference type="SMR" id="Q6GPW6"/>
<dbReference type="STRING" id="8355.Q6GPW6"/>
<dbReference type="PaxDb" id="8355-Q6GPW6"/>
<dbReference type="DNASU" id="444017"/>
<dbReference type="GeneID" id="444017"/>
<dbReference type="KEGG" id="xla:444017"/>
<dbReference type="AGR" id="Xenbase:XB-GENE-1006122"/>
<dbReference type="CTD" id="444017"/>
<dbReference type="Xenbase" id="XB-GENE-1006122">
    <property type="gene designation" value="dguok.L"/>
</dbReference>
<dbReference type="OMA" id="QHEHWLV"/>
<dbReference type="OrthoDB" id="567086at2759"/>
<dbReference type="BRENDA" id="2.7.1.113">
    <property type="organism ID" value="6725"/>
</dbReference>
<dbReference type="Proteomes" id="UP000186698">
    <property type="component" value="Chromosome 3L"/>
</dbReference>
<dbReference type="Proteomes" id="UP000694892">
    <property type="component" value="Chromosome 3L"/>
</dbReference>
<dbReference type="Bgee" id="444017">
    <property type="expression patterns" value="Expressed in oocyte and 19 other cell types or tissues"/>
</dbReference>
<dbReference type="GO" id="GO:0005737">
    <property type="term" value="C:cytoplasm"/>
    <property type="evidence" value="ECO:0000318"/>
    <property type="project" value="GO_Central"/>
</dbReference>
<dbReference type="GO" id="GO:0005739">
    <property type="term" value="C:mitochondrion"/>
    <property type="evidence" value="ECO:0000318"/>
    <property type="project" value="GO_Central"/>
</dbReference>
<dbReference type="GO" id="GO:0005524">
    <property type="term" value="F:ATP binding"/>
    <property type="evidence" value="ECO:0007669"/>
    <property type="project" value="UniProtKB-KW"/>
</dbReference>
<dbReference type="GO" id="GO:0004138">
    <property type="term" value="F:deoxyguanosine kinase activity"/>
    <property type="evidence" value="ECO:0000314"/>
    <property type="project" value="UniProtKB"/>
</dbReference>
<dbReference type="GO" id="GO:0009157">
    <property type="term" value="P:deoxyribonucleoside monophosphate biosynthetic process"/>
    <property type="evidence" value="ECO:0000314"/>
    <property type="project" value="UniProtKB"/>
</dbReference>
<dbReference type="CDD" id="cd01673">
    <property type="entry name" value="dNK"/>
    <property type="match status" value="1"/>
</dbReference>
<dbReference type="FunFam" id="3.40.50.300:FF:000461">
    <property type="entry name" value="Deoxycytidine kinase"/>
    <property type="match status" value="1"/>
</dbReference>
<dbReference type="Gene3D" id="3.40.50.300">
    <property type="entry name" value="P-loop containing nucleotide triphosphate hydrolases"/>
    <property type="match status" value="1"/>
</dbReference>
<dbReference type="InterPro" id="IPR002624">
    <property type="entry name" value="DCK/DGK"/>
</dbReference>
<dbReference type="InterPro" id="IPR050566">
    <property type="entry name" value="Deoxyribonucleoside_kinase"/>
</dbReference>
<dbReference type="InterPro" id="IPR031314">
    <property type="entry name" value="DNK_dom"/>
</dbReference>
<dbReference type="InterPro" id="IPR027417">
    <property type="entry name" value="P-loop_NTPase"/>
</dbReference>
<dbReference type="PANTHER" id="PTHR10513:SF8">
    <property type="entry name" value="DEOXYGUANOSINE KINASE, MITOCHONDRIAL"/>
    <property type="match status" value="1"/>
</dbReference>
<dbReference type="PANTHER" id="PTHR10513">
    <property type="entry name" value="DEOXYNUCLEOSIDE KINASE"/>
    <property type="match status" value="1"/>
</dbReference>
<dbReference type="Pfam" id="PF01712">
    <property type="entry name" value="dNK"/>
    <property type="match status" value="1"/>
</dbReference>
<dbReference type="PIRSF" id="PIRSF000705">
    <property type="entry name" value="DNK"/>
    <property type="match status" value="1"/>
</dbReference>
<dbReference type="SUPFAM" id="SSF52540">
    <property type="entry name" value="P-loop containing nucleoside triphosphate hydrolases"/>
    <property type="match status" value="1"/>
</dbReference>
<sequence>MKSQTTKPLQQSISTNLSSNKEMQVKRLSVEGNIAVGKSTFLRLLSNTFQEWSFATEPLKKWQNIQSTSFQTTTSSKPPMDNLLQLMYDDPKRWSYTFQTFSCMSRFKIQIQPLSEPVLKQQEHVQIFERSVYSDRYIFAKTLYELQHLNEMEWTLYQEWHTFLIQEFSRRVALDGIIYLWATPEKCFERLQRRARKEEKTLQLQYLEKLHDQHESWLTKKTTEVSFENMKNIPVLLLNVEEDFENNSAAGDELNNRVKAFVAGL</sequence>
<comment type="function">
    <text evidence="6">Phosphorylates deoxyguanosine in the mitochondrial matrix with high efficiency but shows very low activity against other deoxynucleosides.</text>
</comment>
<comment type="catalytic activity">
    <reaction evidence="6">
        <text>2'-deoxyguanosine + ATP = dGMP + ADP + H(+)</text>
        <dbReference type="Rhea" id="RHEA:19201"/>
        <dbReference type="ChEBI" id="CHEBI:15378"/>
        <dbReference type="ChEBI" id="CHEBI:17172"/>
        <dbReference type="ChEBI" id="CHEBI:30616"/>
        <dbReference type="ChEBI" id="CHEBI:57673"/>
        <dbReference type="ChEBI" id="CHEBI:456216"/>
        <dbReference type="EC" id="2.7.1.113"/>
    </reaction>
</comment>
<comment type="biophysicochemical properties">
    <kinetics>
        <KM evidence="6">0.5 uM for deoxyguanosine</KM>
        <KM evidence="6">2689 uM for deoxyadenosine</KM>
        <KM evidence="6">4424 uM for deoxycytidine</KM>
        <KM evidence="6">10624 uM for deoxyuridine</KM>
        <KM evidence="6">201859 uM for deoxythymidine</KM>
        <Vmax evidence="6">0.2 umol/min/mg enzyme toward deoxyguanosine</Vmax>
        <Vmax evidence="6">0.6 umol/min/mg enzyme toward deoxyadenosine</Vmax>
        <Vmax evidence="6">1.0 umol/min/mg enzyme toward deoxycytidine</Vmax>
        <Vmax evidence="6">0.1 umol/min/mg enzyme toward deoxythymidine</Vmax>
        <Vmax evidence="6">0.04 umol/min/mg enzyme toward deoxyuridine</Vmax>
        <text evidence="6">kcat is 0.11 sec(-1) with deoxyguanosine as substrate. kcat is 0.30 sec(-1) with deoxyadenosine as substrate. kcat is 0.51 sec(-1) with deoxycytidine as substrate. kcat is 0.02 sec(-1) with deoxyuridine as substrate. kcat is 0.07 sec(-1) with deoxythymidine as substrate.</text>
    </kinetics>
</comment>
<comment type="subunit">
    <text evidence="1">Homodimer.</text>
</comment>
<comment type="subcellular location">
    <subcellularLocation>
        <location evidence="2">Mitochondrion</location>
    </subcellularLocation>
</comment>
<comment type="similarity">
    <text evidence="8">Belongs to the DCK/DGK family.</text>
</comment>
<reference evidence="11" key="1">
    <citation type="journal article" date="2016" name="Nature">
        <title>Genome evolution in the allotetraploid frog Xenopus laevis.</title>
        <authorList>
            <person name="Session A.M."/>
            <person name="Uno Y."/>
            <person name="Kwon T."/>
            <person name="Chapman J.A."/>
            <person name="Toyoda A."/>
            <person name="Takahashi S."/>
            <person name="Fukui A."/>
            <person name="Hikosaka A."/>
            <person name="Suzuki A."/>
            <person name="Kondo M."/>
            <person name="van Heeringen S.J."/>
            <person name="Quigley I."/>
            <person name="Heinz S."/>
            <person name="Ogino H."/>
            <person name="Ochi H."/>
            <person name="Hellsten U."/>
            <person name="Lyons J.B."/>
            <person name="Simakov O."/>
            <person name="Putnam N."/>
            <person name="Stites J."/>
            <person name="Kuroki Y."/>
            <person name="Tanaka T."/>
            <person name="Michiue T."/>
            <person name="Watanabe M."/>
            <person name="Bogdanovic O."/>
            <person name="Lister R."/>
            <person name="Georgiou G."/>
            <person name="Paranjpe S.S."/>
            <person name="van Kruijsbergen I."/>
            <person name="Shu S."/>
            <person name="Carlson J."/>
            <person name="Kinoshita T."/>
            <person name="Ohta Y."/>
            <person name="Mawaribuchi S."/>
            <person name="Jenkins J."/>
            <person name="Grimwood J."/>
            <person name="Schmutz J."/>
            <person name="Mitros T."/>
            <person name="Mozaffari S.V."/>
            <person name="Suzuki Y."/>
            <person name="Haramoto Y."/>
            <person name="Yamamoto T.S."/>
            <person name="Takagi C."/>
            <person name="Heald R."/>
            <person name="Miller K."/>
            <person name="Haudenschild C."/>
            <person name="Kitzman J."/>
            <person name="Nakayama T."/>
            <person name="Izutsu Y."/>
            <person name="Robert J."/>
            <person name="Fortriede J."/>
            <person name="Burns K."/>
            <person name="Lotay V."/>
            <person name="Karimi K."/>
            <person name="Yasuoka Y."/>
            <person name="Dichmann D.S."/>
            <person name="Flajnik M.F."/>
            <person name="Houston D.W."/>
            <person name="Shendure J."/>
            <person name="DuPasquier L."/>
            <person name="Vize P.D."/>
            <person name="Zorn A.M."/>
            <person name="Ito M."/>
            <person name="Marcotte E.M."/>
            <person name="Wallingford J.B."/>
            <person name="Ito Y."/>
            <person name="Asashima M."/>
            <person name="Ueno N."/>
            <person name="Matsuda Y."/>
            <person name="Veenstra G.J."/>
            <person name="Fujiyama A."/>
            <person name="Harland R.M."/>
            <person name="Taira M."/>
            <person name="Rokhsar D.S."/>
        </authorList>
    </citation>
    <scope>NUCLEOTIDE SEQUENCE [LARGE SCALE GENOMIC DNA]</scope>
    <source>
        <strain evidence="11">J</strain>
    </source>
</reference>
<reference evidence="9" key="2">
    <citation type="submission" date="2004-06" db="EMBL/GenBank/DDBJ databases">
        <authorList>
            <consortium name="NIH - Xenopus Gene Collection (XGC) project"/>
        </authorList>
    </citation>
    <scope>NUCLEOTIDE SEQUENCE [LARGE SCALE MRNA]</scope>
    <source>
        <tissue evidence="9">Spleen</tissue>
    </source>
</reference>
<reference evidence="8" key="3">
    <citation type="journal article" date="2016" name="Nucleosides Nucleotides Nucleic Acids">
        <title>Gene duplications and losses among vertebrate deoxyribonucleoside kinases of the non-TK1 Family.</title>
        <authorList>
            <person name="Mutahir Z."/>
            <person name="Christiansen L.S."/>
            <person name="Clausen A.R."/>
            <person name="Berchtold M.W."/>
            <person name="Gojkovic Z."/>
            <person name="Munch-Petersen B."/>
            <person name="Knecht W."/>
            <person name="Piskur J."/>
        </authorList>
    </citation>
    <scope>FUNCTION</scope>
    <scope>CATALYTIC ACTIVITY</scope>
    <scope>BIOPHYSICOCHEMICAL PROPERTIES</scope>
</reference>
<feature type="transit peptide" description="Mitochondrion" evidence="8">
    <location>
        <begin position="1"/>
        <end status="unknown"/>
    </location>
</feature>
<feature type="chain" id="PRO_0000449298" description="Deoxyguanosine kinase, mitochondrial">
    <location>
        <begin status="unknown"/>
        <end position="265"/>
    </location>
</feature>
<feature type="active site" description="Proton acceptor" evidence="3">
    <location>
        <position position="129"/>
    </location>
</feature>
<feature type="binding site" evidence="5">
    <location>
        <begin position="32"/>
        <end position="40"/>
    </location>
    <ligand>
        <name>ATP</name>
        <dbReference type="ChEBI" id="CHEBI:30616"/>
    </ligand>
</feature>
<feature type="binding site" evidence="4">
    <location>
        <position position="57"/>
    </location>
    <ligand>
        <name>substrate</name>
    </ligand>
</feature>
<feature type="binding site" evidence="4">
    <location>
        <position position="88"/>
    </location>
    <ligand>
        <name>substrate</name>
    </ligand>
</feature>
<feature type="binding site" evidence="4">
    <location>
        <position position="99"/>
    </location>
    <ligand>
        <name>substrate</name>
    </ligand>
</feature>
<feature type="binding site" evidence="1">
    <location>
        <position position="106"/>
    </location>
    <ligand>
        <name>substrate</name>
    </ligand>
</feature>
<feature type="binding site" evidence="4">
    <location>
        <position position="130"/>
    </location>
    <ligand>
        <name>substrate</name>
    </ligand>
</feature>
<feature type="binding site" evidence="4">
    <location>
        <position position="135"/>
    </location>
    <ligand>
        <name>substrate</name>
    </ligand>
</feature>
<feature type="binding site" evidence="5">
    <location>
        <begin position="190"/>
        <end position="194"/>
    </location>
    <ligand>
        <name>ATP</name>
        <dbReference type="ChEBI" id="CHEBI:30616"/>
    </ligand>
</feature>
<feature type="binding site" evidence="4">
    <location>
        <position position="199"/>
    </location>
    <ligand>
        <name>substrate</name>
    </ligand>
</feature>
<feature type="binding site" evidence="5">
    <location>
        <begin position="242"/>
        <end position="244"/>
    </location>
    <ligand>
        <name>ATP</name>
        <dbReference type="ChEBI" id="CHEBI:30616"/>
    </ligand>
</feature>
<evidence type="ECO:0000250" key="1">
    <source>
        <dbReference type="UniProtKB" id="Q16854"/>
    </source>
</evidence>
<evidence type="ECO:0000250" key="2">
    <source>
        <dbReference type="UniProtKB" id="Q9QX60"/>
    </source>
</evidence>
<evidence type="ECO:0000255" key="3">
    <source>
        <dbReference type="PIRSR" id="PIRSR000705-1"/>
    </source>
</evidence>
<evidence type="ECO:0000255" key="4">
    <source>
        <dbReference type="PIRSR" id="PIRSR000705-2"/>
    </source>
</evidence>
<evidence type="ECO:0000255" key="5">
    <source>
        <dbReference type="PIRSR" id="PIRSR000705-3"/>
    </source>
</evidence>
<evidence type="ECO:0000269" key="6">
    <source>
    </source>
</evidence>
<evidence type="ECO:0000303" key="7">
    <source>
    </source>
</evidence>
<evidence type="ECO:0000305" key="8"/>
<evidence type="ECO:0000312" key="9">
    <source>
        <dbReference type="EMBL" id="AAH72990.1"/>
    </source>
</evidence>
<evidence type="ECO:0000312" key="10">
    <source>
        <dbReference type="EMBL" id="OCT88768.1"/>
    </source>
</evidence>
<evidence type="ECO:0000312" key="11">
    <source>
        <dbReference type="Proteomes" id="UP000186698"/>
    </source>
</evidence>
<evidence type="ECO:0000312" key="12">
    <source>
        <dbReference type="Xenbase" id="XB-GENE-1006122"/>
    </source>
</evidence>
<protein>
    <recommendedName>
        <fullName evidence="8">Deoxyguanosine kinase, mitochondrial</fullName>
        <shortName evidence="7">XldGK</shortName>
        <ecNumber evidence="6">2.7.1.113</ecNumber>
    </recommendedName>
</protein>